<reference key="1">
    <citation type="journal article" date="2007" name="J. Bacteriol.">
        <title>Genome of the opportunistic pathogen Streptococcus sanguinis.</title>
        <authorList>
            <person name="Xu P."/>
            <person name="Alves J.M."/>
            <person name="Kitten T."/>
            <person name="Brown A."/>
            <person name="Chen Z."/>
            <person name="Ozaki L.S."/>
            <person name="Manque P."/>
            <person name="Ge X."/>
            <person name="Serrano M.G."/>
            <person name="Puiu D."/>
            <person name="Hendricks S."/>
            <person name="Wang Y."/>
            <person name="Chaplin M.D."/>
            <person name="Akan D."/>
            <person name="Paik S."/>
            <person name="Peterson D.L."/>
            <person name="Macrina F.L."/>
            <person name="Buck G.A."/>
        </authorList>
    </citation>
    <scope>NUCLEOTIDE SEQUENCE [LARGE SCALE GENOMIC DNA]</scope>
    <source>
        <strain>SK36</strain>
    </source>
</reference>
<sequence>MAEITAKLVKELREKSGAGVMDAKKALVETDGDIEKAIELLREKGMAKAAKKADRVAAEGLTGVYVNGNVAAVVEVNAETDFVAKNAQFVDLVNATAKVIAEGKPANNEEALALTMPSGETLEAAYVSATATIGEKISFRRFALIEKTDAQHFGAYQHNGGRIGVISVIEGGDDALAKQISMHIAAMKPTVLSYKELDEQFVKDELAQLNHVIDQDNESRAMVGKPALPHLKYGSKAQLTDAVVAQAEEDIKAELAAEGKPEKIWDKIIPGKMDRFMLDNTKVDQAYTLLAQVYIMDDSKTVEAYLESVNASVVEFARFEVGEGIEKAANDFENEVAATMAAALGQN</sequence>
<feature type="chain" id="PRO_1000006193" description="Elongation factor Ts">
    <location>
        <begin position="1"/>
        <end position="347"/>
    </location>
</feature>
<feature type="region of interest" description="Involved in Mg(2+) ion dislocation from EF-Tu" evidence="1">
    <location>
        <begin position="80"/>
        <end position="83"/>
    </location>
</feature>
<comment type="function">
    <text evidence="1">Associates with the EF-Tu.GDP complex and induces the exchange of GDP to GTP. It remains bound to the aminoacyl-tRNA.EF-Tu.GTP complex up to the GTP hydrolysis stage on the ribosome.</text>
</comment>
<comment type="subcellular location">
    <subcellularLocation>
        <location evidence="1">Cytoplasm</location>
    </subcellularLocation>
</comment>
<comment type="similarity">
    <text evidence="1">Belongs to the EF-Ts family.</text>
</comment>
<proteinExistence type="inferred from homology"/>
<protein>
    <recommendedName>
        <fullName evidence="1">Elongation factor Ts</fullName>
        <shortName evidence="1">EF-Ts</shortName>
    </recommendedName>
</protein>
<accession>A3CQW2</accession>
<organism>
    <name type="scientific">Streptococcus sanguinis (strain SK36)</name>
    <dbReference type="NCBI Taxonomy" id="388919"/>
    <lineage>
        <taxon>Bacteria</taxon>
        <taxon>Bacillati</taxon>
        <taxon>Bacillota</taxon>
        <taxon>Bacilli</taxon>
        <taxon>Lactobacillales</taxon>
        <taxon>Streptococcaceae</taxon>
        <taxon>Streptococcus</taxon>
    </lineage>
</organism>
<name>EFTS_STRSV</name>
<keyword id="KW-0963">Cytoplasm</keyword>
<keyword id="KW-0251">Elongation factor</keyword>
<keyword id="KW-0648">Protein biosynthesis</keyword>
<keyword id="KW-1185">Reference proteome</keyword>
<dbReference type="EMBL" id="CP000387">
    <property type="protein sequence ID" value="ABN45567.1"/>
    <property type="molecule type" value="Genomic_DNA"/>
</dbReference>
<dbReference type="RefSeq" id="WP_002894014.1">
    <property type="nucleotide sequence ID" value="NC_009009.1"/>
</dbReference>
<dbReference type="RefSeq" id="YP_001036117.1">
    <property type="nucleotide sequence ID" value="NC_009009.1"/>
</dbReference>
<dbReference type="SMR" id="A3CQW2"/>
<dbReference type="STRING" id="388919.SSA_2202"/>
<dbReference type="GeneID" id="48424626"/>
<dbReference type="KEGG" id="ssa:SSA_2202"/>
<dbReference type="PATRIC" id="fig|388919.9.peg.2087"/>
<dbReference type="eggNOG" id="COG0264">
    <property type="taxonomic scope" value="Bacteria"/>
</dbReference>
<dbReference type="HOGENOM" id="CLU_047155_0_1_9"/>
<dbReference type="OrthoDB" id="9808348at2"/>
<dbReference type="Proteomes" id="UP000002148">
    <property type="component" value="Chromosome"/>
</dbReference>
<dbReference type="GO" id="GO:0005737">
    <property type="term" value="C:cytoplasm"/>
    <property type="evidence" value="ECO:0007669"/>
    <property type="project" value="UniProtKB-SubCell"/>
</dbReference>
<dbReference type="GO" id="GO:0003746">
    <property type="term" value="F:translation elongation factor activity"/>
    <property type="evidence" value="ECO:0007669"/>
    <property type="project" value="UniProtKB-UniRule"/>
</dbReference>
<dbReference type="CDD" id="cd14275">
    <property type="entry name" value="UBA_EF-Ts"/>
    <property type="match status" value="1"/>
</dbReference>
<dbReference type="FunFam" id="1.10.286.20:FF:000004">
    <property type="entry name" value="Elongation factor Ts"/>
    <property type="match status" value="1"/>
</dbReference>
<dbReference type="FunFam" id="1.10.8.10:FF:000001">
    <property type="entry name" value="Elongation factor Ts"/>
    <property type="match status" value="1"/>
</dbReference>
<dbReference type="FunFam" id="3.30.479.20:FF:000009">
    <property type="entry name" value="Elongation factor Ts"/>
    <property type="match status" value="1"/>
</dbReference>
<dbReference type="FunFam" id="3.30.479.20:FF:000013">
    <property type="entry name" value="Elongation factor Ts"/>
    <property type="match status" value="1"/>
</dbReference>
<dbReference type="Gene3D" id="1.10.286.20">
    <property type="match status" value="1"/>
</dbReference>
<dbReference type="Gene3D" id="1.10.8.10">
    <property type="entry name" value="DNA helicase RuvA subunit, C-terminal domain"/>
    <property type="match status" value="1"/>
</dbReference>
<dbReference type="Gene3D" id="3.30.479.20">
    <property type="entry name" value="Elongation factor Ts, dimerisation domain"/>
    <property type="match status" value="3"/>
</dbReference>
<dbReference type="HAMAP" id="MF_00050">
    <property type="entry name" value="EF_Ts"/>
    <property type="match status" value="1"/>
</dbReference>
<dbReference type="InterPro" id="IPR036402">
    <property type="entry name" value="EF-Ts_dimer_sf"/>
</dbReference>
<dbReference type="InterPro" id="IPR001816">
    <property type="entry name" value="Transl_elong_EFTs/EF1B"/>
</dbReference>
<dbReference type="InterPro" id="IPR014039">
    <property type="entry name" value="Transl_elong_EFTs/EF1B_dimer"/>
</dbReference>
<dbReference type="InterPro" id="IPR018101">
    <property type="entry name" value="Transl_elong_Ts_CS"/>
</dbReference>
<dbReference type="InterPro" id="IPR009060">
    <property type="entry name" value="UBA-like_sf"/>
</dbReference>
<dbReference type="NCBIfam" id="TIGR00116">
    <property type="entry name" value="tsf"/>
    <property type="match status" value="1"/>
</dbReference>
<dbReference type="PANTHER" id="PTHR11741">
    <property type="entry name" value="ELONGATION FACTOR TS"/>
    <property type="match status" value="1"/>
</dbReference>
<dbReference type="PANTHER" id="PTHR11741:SF0">
    <property type="entry name" value="ELONGATION FACTOR TS, MITOCHONDRIAL"/>
    <property type="match status" value="1"/>
</dbReference>
<dbReference type="Pfam" id="PF00889">
    <property type="entry name" value="EF_TS"/>
    <property type="match status" value="1"/>
</dbReference>
<dbReference type="SUPFAM" id="SSF54713">
    <property type="entry name" value="Elongation factor Ts (EF-Ts), dimerisation domain"/>
    <property type="match status" value="2"/>
</dbReference>
<dbReference type="SUPFAM" id="SSF46934">
    <property type="entry name" value="UBA-like"/>
    <property type="match status" value="1"/>
</dbReference>
<dbReference type="PROSITE" id="PS01126">
    <property type="entry name" value="EF_TS_1"/>
    <property type="match status" value="1"/>
</dbReference>
<dbReference type="PROSITE" id="PS01127">
    <property type="entry name" value="EF_TS_2"/>
    <property type="match status" value="1"/>
</dbReference>
<evidence type="ECO:0000255" key="1">
    <source>
        <dbReference type="HAMAP-Rule" id="MF_00050"/>
    </source>
</evidence>
<gene>
    <name evidence="1" type="primary">tsf</name>
    <name type="ordered locus">SSA_2202</name>
</gene>